<organism>
    <name type="scientific">Vanderwaltozyma polyspora (strain ATCC 22028 / DSM 70294 / BCRC 21397 / CBS 2163 / NBRC 10782 / NRRL Y-8283 / UCD 57-17)</name>
    <name type="common">Kluyveromyces polysporus</name>
    <dbReference type="NCBI Taxonomy" id="436907"/>
    <lineage>
        <taxon>Eukaryota</taxon>
        <taxon>Fungi</taxon>
        <taxon>Dikarya</taxon>
        <taxon>Ascomycota</taxon>
        <taxon>Saccharomycotina</taxon>
        <taxon>Saccharomycetes</taxon>
        <taxon>Saccharomycetales</taxon>
        <taxon>Saccharomycetaceae</taxon>
        <taxon>Vanderwaltozyma</taxon>
    </lineage>
</organism>
<gene>
    <name type="primary">ATP9</name>
    <name type="ORF">VapofMp02</name>
</gene>
<name>ATP9_VANPO</name>
<feature type="chain" id="PRO_0000356859" description="ATP synthase subunit 9, mitochondrial">
    <location>
        <begin position="1"/>
        <end position="76"/>
    </location>
</feature>
<feature type="transmembrane region" description="Helical" evidence="2">
    <location>
        <begin position="14"/>
        <end position="34"/>
    </location>
</feature>
<feature type="transmembrane region" description="Helical" evidence="2">
    <location>
        <begin position="52"/>
        <end position="72"/>
    </location>
</feature>
<feature type="site" description="Reversibly protonated during proton transport" evidence="1">
    <location>
        <position position="59"/>
    </location>
</feature>
<sequence>MQLVLAAKYIGAGISTIGLLGAGIGIAIVFAALINGVSRNPSLRETLFPMAILGFALSEATGLFCLMISFLLIYAV</sequence>
<protein>
    <recommendedName>
        <fullName>ATP synthase subunit 9, mitochondrial</fullName>
    </recommendedName>
    <alternativeName>
        <fullName>Lipid-binding protein</fullName>
    </alternativeName>
</protein>
<evidence type="ECO:0000250" key="1"/>
<evidence type="ECO:0000255" key="2"/>
<evidence type="ECO:0000305" key="3"/>
<keyword id="KW-0138">CF(0)</keyword>
<keyword id="KW-0375">Hydrogen ion transport</keyword>
<keyword id="KW-0406">Ion transport</keyword>
<keyword id="KW-0446">Lipid-binding</keyword>
<keyword id="KW-0472">Membrane</keyword>
<keyword id="KW-0496">Mitochondrion</keyword>
<keyword id="KW-1185">Reference proteome</keyword>
<keyword id="KW-0812">Transmembrane</keyword>
<keyword id="KW-1133">Transmembrane helix</keyword>
<keyword id="KW-0813">Transport</keyword>
<geneLocation type="mitochondrion"/>
<proteinExistence type="inferred from homology"/>
<dbReference type="EMBL" id="AM698041">
    <property type="protein sequence ID" value="CAN85575.1"/>
    <property type="molecule type" value="Genomic_DNA"/>
</dbReference>
<dbReference type="RefSeq" id="YP_001331014.1">
    <property type="nucleotide sequence ID" value="NC_009638.1"/>
</dbReference>
<dbReference type="SMR" id="A6H4Q2"/>
<dbReference type="FunCoup" id="A6H4Q2">
    <property type="interactions" value="915"/>
</dbReference>
<dbReference type="STRING" id="436907.A6H4Q2"/>
<dbReference type="KEGG" id="vpo:VapofMp02"/>
<dbReference type="InParanoid" id="A6H4Q2"/>
<dbReference type="Proteomes" id="UP000000267">
    <property type="component" value="Mitochondrion"/>
</dbReference>
<dbReference type="GO" id="GO:0031966">
    <property type="term" value="C:mitochondrial membrane"/>
    <property type="evidence" value="ECO:0007669"/>
    <property type="project" value="UniProtKB-SubCell"/>
</dbReference>
<dbReference type="GO" id="GO:0045259">
    <property type="term" value="C:proton-transporting ATP synthase complex"/>
    <property type="evidence" value="ECO:0007669"/>
    <property type="project" value="UniProtKB-KW"/>
</dbReference>
<dbReference type="GO" id="GO:0033177">
    <property type="term" value="C:proton-transporting two-sector ATPase complex, proton-transporting domain"/>
    <property type="evidence" value="ECO:0007669"/>
    <property type="project" value="InterPro"/>
</dbReference>
<dbReference type="GO" id="GO:0008289">
    <property type="term" value="F:lipid binding"/>
    <property type="evidence" value="ECO:0007669"/>
    <property type="project" value="UniProtKB-KW"/>
</dbReference>
<dbReference type="GO" id="GO:0015078">
    <property type="term" value="F:proton transmembrane transporter activity"/>
    <property type="evidence" value="ECO:0007669"/>
    <property type="project" value="InterPro"/>
</dbReference>
<dbReference type="GO" id="GO:0015986">
    <property type="term" value="P:proton motive force-driven ATP synthesis"/>
    <property type="evidence" value="ECO:0007669"/>
    <property type="project" value="InterPro"/>
</dbReference>
<dbReference type="CDD" id="cd18182">
    <property type="entry name" value="ATP-synt_Fo_c_ATP5G3"/>
    <property type="match status" value="1"/>
</dbReference>
<dbReference type="FunFam" id="1.20.20.10:FF:000014">
    <property type="entry name" value="ATP synthase subunit 9, mitochondrial"/>
    <property type="match status" value="1"/>
</dbReference>
<dbReference type="Gene3D" id="1.20.20.10">
    <property type="entry name" value="F1F0 ATP synthase subunit C"/>
    <property type="match status" value="1"/>
</dbReference>
<dbReference type="HAMAP" id="MF_01396">
    <property type="entry name" value="ATP_synth_c_bact"/>
    <property type="match status" value="1"/>
</dbReference>
<dbReference type="InterPro" id="IPR000454">
    <property type="entry name" value="ATP_synth_F0_csu"/>
</dbReference>
<dbReference type="InterPro" id="IPR020537">
    <property type="entry name" value="ATP_synth_F0_csu_DDCD_BS"/>
</dbReference>
<dbReference type="InterPro" id="IPR038662">
    <property type="entry name" value="ATP_synth_F0_csu_sf"/>
</dbReference>
<dbReference type="InterPro" id="IPR002379">
    <property type="entry name" value="ATPase_proteolipid_c-like_dom"/>
</dbReference>
<dbReference type="InterPro" id="IPR035921">
    <property type="entry name" value="F/V-ATP_Csub_sf"/>
</dbReference>
<dbReference type="PANTHER" id="PTHR10031">
    <property type="entry name" value="ATP SYNTHASE LIPID-BINDING PROTEIN, MITOCHONDRIAL"/>
    <property type="match status" value="1"/>
</dbReference>
<dbReference type="PANTHER" id="PTHR10031:SF0">
    <property type="entry name" value="ATPASE PROTEIN 9"/>
    <property type="match status" value="1"/>
</dbReference>
<dbReference type="Pfam" id="PF00137">
    <property type="entry name" value="ATP-synt_C"/>
    <property type="match status" value="1"/>
</dbReference>
<dbReference type="PRINTS" id="PR00124">
    <property type="entry name" value="ATPASEC"/>
</dbReference>
<dbReference type="SUPFAM" id="SSF81333">
    <property type="entry name" value="F1F0 ATP synthase subunit C"/>
    <property type="match status" value="1"/>
</dbReference>
<dbReference type="PROSITE" id="PS00605">
    <property type="entry name" value="ATPASE_C"/>
    <property type="match status" value="1"/>
</dbReference>
<accession>A6H4Q2</accession>
<comment type="function">
    <text evidence="1">Mitochondrial membrane ATP synthase (F(1)F(0) ATP synthase or Complex V) produces ATP from ADP in the presence of a proton gradient across the membrane which is generated by electron transport complexes of the respiratory chain. F-type ATPases consist of two structural domains, F(1) - containing the extramembraneous catalytic core and F(0) - containing the membrane proton channel, linked together by a central stalk and a peripheral stalk. During catalysis, ATP synthesis in the catalytic domain of F(1) is coupled via a rotary mechanism of the central stalk subunits to proton translocation. Part of the complex F(0) domain. A homomeric c-ring of probably 10 subunits is part of the complex rotary element (By similarity).</text>
</comment>
<comment type="subunit">
    <text>F-type ATPases have 2 components, CF(1) - the catalytic core - and CF(0) - the membrane proton channel. CF(1) has five subunits: alpha(3), beta(3), gamma(1), delta(1), epsilon(1). CF(0) has three main subunits: a, b and c.</text>
</comment>
<comment type="subcellular location">
    <subcellularLocation>
        <location evidence="3">Mitochondrion membrane</location>
        <topology evidence="3">Multi-pass membrane protein</topology>
    </subcellularLocation>
</comment>
<comment type="similarity">
    <text evidence="3">Belongs to the ATPase C chain family.</text>
</comment>
<reference key="1">
    <citation type="journal article" date="2007" name="Proc. Natl. Acad. Sci. U.S.A.">
        <title>Independent sorting-out of thousands of duplicated gene pairs in two yeast species descended from a whole-genome duplication.</title>
        <authorList>
            <person name="Scannell D.R."/>
            <person name="Frank A.C."/>
            <person name="Conant G.C."/>
            <person name="Byrne K.P."/>
            <person name="Woolfit M."/>
            <person name="Wolfe K.H."/>
        </authorList>
    </citation>
    <scope>NUCLEOTIDE SEQUENCE [LARGE SCALE GENOMIC DNA]</scope>
    <source>
        <strain>ATCC 22028 / DSM 70294 / BCRC 21397 / CBS 2163 / NBRC 10782 / NRRL Y-8283 / UCD 57-17</strain>
    </source>
</reference>